<gene>
    <name evidence="2" type="primary">tuf</name>
    <name type="ordered locus">Sare_4317</name>
</gene>
<name>EFTU_SALAI</name>
<comment type="function">
    <text evidence="2">GTP hydrolase that promotes the GTP-dependent binding of aminoacyl-tRNA to the A-site of ribosomes during protein biosynthesis.</text>
</comment>
<comment type="catalytic activity">
    <reaction evidence="2">
        <text>GTP + H2O = GDP + phosphate + H(+)</text>
        <dbReference type="Rhea" id="RHEA:19669"/>
        <dbReference type="ChEBI" id="CHEBI:15377"/>
        <dbReference type="ChEBI" id="CHEBI:15378"/>
        <dbReference type="ChEBI" id="CHEBI:37565"/>
        <dbReference type="ChEBI" id="CHEBI:43474"/>
        <dbReference type="ChEBI" id="CHEBI:58189"/>
        <dbReference type="EC" id="3.6.5.3"/>
    </reaction>
    <physiologicalReaction direction="left-to-right" evidence="2">
        <dbReference type="Rhea" id="RHEA:19670"/>
    </physiologicalReaction>
</comment>
<comment type="subunit">
    <text evidence="2">Monomer.</text>
</comment>
<comment type="subcellular location">
    <subcellularLocation>
        <location evidence="2">Cytoplasm</location>
    </subcellularLocation>
</comment>
<comment type="similarity">
    <text evidence="2">Belongs to the TRAFAC class translation factor GTPase superfamily. Classic translation factor GTPase family. EF-Tu/EF-1A subfamily.</text>
</comment>
<accession>A8M531</accession>
<keyword id="KW-0963">Cytoplasm</keyword>
<keyword id="KW-0251">Elongation factor</keyword>
<keyword id="KW-0342">GTP-binding</keyword>
<keyword id="KW-0378">Hydrolase</keyword>
<keyword id="KW-0460">Magnesium</keyword>
<keyword id="KW-0479">Metal-binding</keyword>
<keyword id="KW-0547">Nucleotide-binding</keyword>
<keyword id="KW-0648">Protein biosynthesis</keyword>
<organism>
    <name type="scientific">Salinispora arenicola (strain CNS-205)</name>
    <dbReference type="NCBI Taxonomy" id="391037"/>
    <lineage>
        <taxon>Bacteria</taxon>
        <taxon>Bacillati</taxon>
        <taxon>Actinomycetota</taxon>
        <taxon>Actinomycetes</taxon>
        <taxon>Micromonosporales</taxon>
        <taxon>Micromonosporaceae</taxon>
        <taxon>Salinispora</taxon>
    </lineage>
</organism>
<sequence>MAKAKFERTKPHVNIGTIGHIDHGKTTLTAAITKVLHDQHPDLNPYMPFDEIDKAPEEKARGITISIAHVEYQTEARHYAHVDCPGHADYIKNMITGAAQMDGAILVVAATDGPMPQTREHVLLARQVGVPYIVVALNKSDMVDDEELLELVELEVRELLSSQEYPGDDLPVVRVSALKALEGDPEWAGKLMELMTAVDTSIPQPERETEKPFLMPIEDVFTITGRGTVVTGRAERGILKPNEEVELVGIREKSTKTTCTGIEMFRKLLDEARAGENVGLLLRGVKREDVERGMVVIKPGTATPHTEFEATVYILSKEEGGRHTPFFQNYRPQFYFRTTDVTGVVTLPEGTEMVMPGDNTTMTVKLIQPIAMEENLKFAIREGGRTVGAGRVTKIIK</sequence>
<evidence type="ECO:0000250" key="1"/>
<evidence type="ECO:0000255" key="2">
    <source>
        <dbReference type="HAMAP-Rule" id="MF_00118"/>
    </source>
</evidence>
<reference key="1">
    <citation type="submission" date="2007-10" db="EMBL/GenBank/DDBJ databases">
        <title>Complete sequence of Salinispora arenicola CNS-205.</title>
        <authorList>
            <consortium name="US DOE Joint Genome Institute"/>
            <person name="Copeland A."/>
            <person name="Lucas S."/>
            <person name="Lapidus A."/>
            <person name="Barry K."/>
            <person name="Glavina del Rio T."/>
            <person name="Dalin E."/>
            <person name="Tice H."/>
            <person name="Pitluck S."/>
            <person name="Foster B."/>
            <person name="Schmutz J."/>
            <person name="Larimer F."/>
            <person name="Land M."/>
            <person name="Hauser L."/>
            <person name="Kyrpides N."/>
            <person name="Ivanova N."/>
            <person name="Jensen P.R."/>
            <person name="Moore B.S."/>
            <person name="Penn K."/>
            <person name="Jenkins C."/>
            <person name="Udwary D."/>
            <person name="Xiang L."/>
            <person name="Gontang E."/>
            <person name="Richardson P."/>
        </authorList>
    </citation>
    <scope>NUCLEOTIDE SEQUENCE [LARGE SCALE GENOMIC DNA]</scope>
    <source>
        <strain>CNS-205</strain>
    </source>
</reference>
<feature type="chain" id="PRO_1000076109" description="Elongation factor Tu">
    <location>
        <begin position="1"/>
        <end position="397"/>
    </location>
</feature>
<feature type="domain" description="tr-type G">
    <location>
        <begin position="10"/>
        <end position="206"/>
    </location>
</feature>
<feature type="region of interest" description="G1" evidence="1">
    <location>
        <begin position="19"/>
        <end position="26"/>
    </location>
</feature>
<feature type="region of interest" description="G2" evidence="1">
    <location>
        <begin position="62"/>
        <end position="66"/>
    </location>
</feature>
<feature type="region of interest" description="G3" evidence="1">
    <location>
        <begin position="83"/>
        <end position="86"/>
    </location>
</feature>
<feature type="region of interest" description="G4" evidence="1">
    <location>
        <begin position="138"/>
        <end position="141"/>
    </location>
</feature>
<feature type="region of interest" description="G5" evidence="1">
    <location>
        <begin position="176"/>
        <end position="178"/>
    </location>
</feature>
<feature type="binding site" evidence="2">
    <location>
        <begin position="19"/>
        <end position="26"/>
    </location>
    <ligand>
        <name>GTP</name>
        <dbReference type="ChEBI" id="CHEBI:37565"/>
    </ligand>
</feature>
<feature type="binding site" evidence="2">
    <location>
        <position position="26"/>
    </location>
    <ligand>
        <name>Mg(2+)</name>
        <dbReference type="ChEBI" id="CHEBI:18420"/>
    </ligand>
</feature>
<feature type="binding site" evidence="2">
    <location>
        <begin position="83"/>
        <end position="87"/>
    </location>
    <ligand>
        <name>GTP</name>
        <dbReference type="ChEBI" id="CHEBI:37565"/>
    </ligand>
</feature>
<feature type="binding site" evidence="2">
    <location>
        <begin position="138"/>
        <end position="141"/>
    </location>
    <ligand>
        <name>GTP</name>
        <dbReference type="ChEBI" id="CHEBI:37565"/>
    </ligand>
</feature>
<proteinExistence type="inferred from homology"/>
<dbReference type="EC" id="3.6.5.3" evidence="2"/>
<dbReference type="EMBL" id="CP000850">
    <property type="protein sequence ID" value="ABW00099.1"/>
    <property type="molecule type" value="Genomic_DNA"/>
</dbReference>
<dbReference type="SMR" id="A8M531"/>
<dbReference type="STRING" id="391037.Sare_4317"/>
<dbReference type="KEGG" id="saq:Sare_4317"/>
<dbReference type="PATRIC" id="fig|391037.6.peg.4358"/>
<dbReference type="eggNOG" id="COG0050">
    <property type="taxonomic scope" value="Bacteria"/>
</dbReference>
<dbReference type="HOGENOM" id="CLU_007265_0_1_11"/>
<dbReference type="OrthoDB" id="9803139at2"/>
<dbReference type="GO" id="GO:0005829">
    <property type="term" value="C:cytosol"/>
    <property type="evidence" value="ECO:0007669"/>
    <property type="project" value="TreeGrafter"/>
</dbReference>
<dbReference type="GO" id="GO:0005525">
    <property type="term" value="F:GTP binding"/>
    <property type="evidence" value="ECO:0007669"/>
    <property type="project" value="UniProtKB-UniRule"/>
</dbReference>
<dbReference type="GO" id="GO:0003924">
    <property type="term" value="F:GTPase activity"/>
    <property type="evidence" value="ECO:0007669"/>
    <property type="project" value="InterPro"/>
</dbReference>
<dbReference type="GO" id="GO:0003746">
    <property type="term" value="F:translation elongation factor activity"/>
    <property type="evidence" value="ECO:0007669"/>
    <property type="project" value="UniProtKB-UniRule"/>
</dbReference>
<dbReference type="CDD" id="cd01884">
    <property type="entry name" value="EF_Tu"/>
    <property type="match status" value="1"/>
</dbReference>
<dbReference type="CDD" id="cd03697">
    <property type="entry name" value="EFTU_II"/>
    <property type="match status" value="1"/>
</dbReference>
<dbReference type="CDD" id="cd03707">
    <property type="entry name" value="EFTU_III"/>
    <property type="match status" value="1"/>
</dbReference>
<dbReference type="FunFam" id="2.40.30.10:FF:000001">
    <property type="entry name" value="Elongation factor Tu"/>
    <property type="match status" value="1"/>
</dbReference>
<dbReference type="FunFam" id="3.40.50.300:FF:000003">
    <property type="entry name" value="Elongation factor Tu"/>
    <property type="match status" value="1"/>
</dbReference>
<dbReference type="Gene3D" id="3.40.50.300">
    <property type="entry name" value="P-loop containing nucleotide triphosphate hydrolases"/>
    <property type="match status" value="1"/>
</dbReference>
<dbReference type="Gene3D" id="2.40.30.10">
    <property type="entry name" value="Translation factors"/>
    <property type="match status" value="2"/>
</dbReference>
<dbReference type="HAMAP" id="MF_00118_B">
    <property type="entry name" value="EF_Tu_B"/>
    <property type="match status" value="1"/>
</dbReference>
<dbReference type="InterPro" id="IPR041709">
    <property type="entry name" value="EF-Tu_GTP-bd"/>
</dbReference>
<dbReference type="InterPro" id="IPR050055">
    <property type="entry name" value="EF-Tu_GTPase"/>
</dbReference>
<dbReference type="InterPro" id="IPR004161">
    <property type="entry name" value="EFTu-like_2"/>
</dbReference>
<dbReference type="InterPro" id="IPR033720">
    <property type="entry name" value="EFTU_2"/>
</dbReference>
<dbReference type="InterPro" id="IPR031157">
    <property type="entry name" value="G_TR_CS"/>
</dbReference>
<dbReference type="InterPro" id="IPR027417">
    <property type="entry name" value="P-loop_NTPase"/>
</dbReference>
<dbReference type="InterPro" id="IPR005225">
    <property type="entry name" value="Small_GTP-bd"/>
</dbReference>
<dbReference type="InterPro" id="IPR000795">
    <property type="entry name" value="T_Tr_GTP-bd_dom"/>
</dbReference>
<dbReference type="InterPro" id="IPR009000">
    <property type="entry name" value="Transl_B-barrel_sf"/>
</dbReference>
<dbReference type="InterPro" id="IPR009001">
    <property type="entry name" value="Transl_elong_EF1A/Init_IF2_C"/>
</dbReference>
<dbReference type="InterPro" id="IPR004541">
    <property type="entry name" value="Transl_elong_EFTu/EF1A_bac/org"/>
</dbReference>
<dbReference type="InterPro" id="IPR004160">
    <property type="entry name" value="Transl_elong_EFTu/EF1A_C"/>
</dbReference>
<dbReference type="NCBIfam" id="TIGR00485">
    <property type="entry name" value="EF-Tu"/>
    <property type="match status" value="1"/>
</dbReference>
<dbReference type="NCBIfam" id="NF000766">
    <property type="entry name" value="PRK00049.1"/>
    <property type="match status" value="1"/>
</dbReference>
<dbReference type="NCBIfam" id="NF009372">
    <property type="entry name" value="PRK12735.1"/>
    <property type="match status" value="1"/>
</dbReference>
<dbReference type="NCBIfam" id="NF009373">
    <property type="entry name" value="PRK12736.1"/>
    <property type="match status" value="1"/>
</dbReference>
<dbReference type="NCBIfam" id="TIGR00231">
    <property type="entry name" value="small_GTP"/>
    <property type="match status" value="1"/>
</dbReference>
<dbReference type="PANTHER" id="PTHR43721:SF22">
    <property type="entry name" value="ELONGATION FACTOR TU, MITOCHONDRIAL"/>
    <property type="match status" value="1"/>
</dbReference>
<dbReference type="PANTHER" id="PTHR43721">
    <property type="entry name" value="ELONGATION FACTOR TU-RELATED"/>
    <property type="match status" value="1"/>
</dbReference>
<dbReference type="Pfam" id="PF00009">
    <property type="entry name" value="GTP_EFTU"/>
    <property type="match status" value="1"/>
</dbReference>
<dbReference type="Pfam" id="PF03144">
    <property type="entry name" value="GTP_EFTU_D2"/>
    <property type="match status" value="1"/>
</dbReference>
<dbReference type="Pfam" id="PF03143">
    <property type="entry name" value="GTP_EFTU_D3"/>
    <property type="match status" value="1"/>
</dbReference>
<dbReference type="PRINTS" id="PR00315">
    <property type="entry name" value="ELONGATNFCT"/>
</dbReference>
<dbReference type="SUPFAM" id="SSF50465">
    <property type="entry name" value="EF-Tu/eEF-1alpha/eIF2-gamma C-terminal domain"/>
    <property type="match status" value="1"/>
</dbReference>
<dbReference type="SUPFAM" id="SSF52540">
    <property type="entry name" value="P-loop containing nucleoside triphosphate hydrolases"/>
    <property type="match status" value="1"/>
</dbReference>
<dbReference type="SUPFAM" id="SSF50447">
    <property type="entry name" value="Translation proteins"/>
    <property type="match status" value="1"/>
</dbReference>
<dbReference type="PROSITE" id="PS00301">
    <property type="entry name" value="G_TR_1"/>
    <property type="match status" value="1"/>
</dbReference>
<dbReference type="PROSITE" id="PS51722">
    <property type="entry name" value="G_TR_2"/>
    <property type="match status" value="1"/>
</dbReference>
<protein>
    <recommendedName>
        <fullName evidence="2">Elongation factor Tu</fullName>
        <shortName evidence="2">EF-Tu</shortName>
        <ecNumber evidence="2">3.6.5.3</ecNumber>
    </recommendedName>
</protein>